<sequence length="97" mass="10639">MSNISKETVEKVANLAKLEVSETEATAFAGQLGKIIELVEQLNTLDTNNVEPTSHAIDVSNVLREDVATKGLDRKEVLKNAPDQQDGMFKVPTIMEQ</sequence>
<gene>
    <name evidence="1" type="primary">gatC</name>
    <name type="ordered locus">lin1868</name>
</gene>
<name>GATC_LISIN</name>
<proteinExistence type="inferred from homology"/>
<evidence type="ECO:0000255" key="1">
    <source>
        <dbReference type="HAMAP-Rule" id="MF_00122"/>
    </source>
</evidence>
<organism>
    <name type="scientific">Listeria innocua serovar 6a (strain ATCC BAA-680 / CLIP 11262)</name>
    <dbReference type="NCBI Taxonomy" id="272626"/>
    <lineage>
        <taxon>Bacteria</taxon>
        <taxon>Bacillati</taxon>
        <taxon>Bacillota</taxon>
        <taxon>Bacilli</taxon>
        <taxon>Bacillales</taxon>
        <taxon>Listeriaceae</taxon>
        <taxon>Listeria</taxon>
    </lineage>
</organism>
<dbReference type="EC" id="6.3.5.-" evidence="1"/>
<dbReference type="EMBL" id="AL596170">
    <property type="protein sequence ID" value="CAC97098.1"/>
    <property type="molecule type" value="Genomic_DNA"/>
</dbReference>
<dbReference type="PIR" id="AB1666">
    <property type="entry name" value="AB1666"/>
</dbReference>
<dbReference type="RefSeq" id="WP_003762830.1">
    <property type="nucleotide sequence ID" value="NC_003212.1"/>
</dbReference>
<dbReference type="SMR" id="Q92AQ2"/>
<dbReference type="STRING" id="272626.gene:17566223"/>
<dbReference type="GeneID" id="93235203"/>
<dbReference type="KEGG" id="lin:gatC"/>
<dbReference type="eggNOG" id="COG0721">
    <property type="taxonomic scope" value="Bacteria"/>
</dbReference>
<dbReference type="HOGENOM" id="CLU_105899_6_1_9"/>
<dbReference type="OrthoDB" id="9813938at2"/>
<dbReference type="Proteomes" id="UP000002513">
    <property type="component" value="Chromosome"/>
</dbReference>
<dbReference type="GO" id="GO:0050566">
    <property type="term" value="F:asparaginyl-tRNA synthase (glutamine-hydrolyzing) activity"/>
    <property type="evidence" value="ECO:0007669"/>
    <property type="project" value="RHEA"/>
</dbReference>
<dbReference type="GO" id="GO:0005524">
    <property type="term" value="F:ATP binding"/>
    <property type="evidence" value="ECO:0007669"/>
    <property type="project" value="UniProtKB-KW"/>
</dbReference>
<dbReference type="GO" id="GO:0050567">
    <property type="term" value="F:glutaminyl-tRNA synthase (glutamine-hydrolyzing) activity"/>
    <property type="evidence" value="ECO:0007669"/>
    <property type="project" value="UniProtKB-UniRule"/>
</dbReference>
<dbReference type="GO" id="GO:0070681">
    <property type="term" value="P:glutaminyl-tRNAGln biosynthesis via transamidation"/>
    <property type="evidence" value="ECO:0007669"/>
    <property type="project" value="TreeGrafter"/>
</dbReference>
<dbReference type="GO" id="GO:0006450">
    <property type="term" value="P:regulation of translational fidelity"/>
    <property type="evidence" value="ECO:0007669"/>
    <property type="project" value="InterPro"/>
</dbReference>
<dbReference type="GO" id="GO:0006412">
    <property type="term" value="P:translation"/>
    <property type="evidence" value="ECO:0007669"/>
    <property type="project" value="UniProtKB-UniRule"/>
</dbReference>
<dbReference type="Gene3D" id="1.10.20.60">
    <property type="entry name" value="Glu-tRNAGln amidotransferase C subunit, N-terminal domain"/>
    <property type="match status" value="1"/>
</dbReference>
<dbReference type="HAMAP" id="MF_00122">
    <property type="entry name" value="GatC"/>
    <property type="match status" value="1"/>
</dbReference>
<dbReference type="InterPro" id="IPR036113">
    <property type="entry name" value="Asp/Glu-ADT_sf_sub_c"/>
</dbReference>
<dbReference type="InterPro" id="IPR003837">
    <property type="entry name" value="GatC"/>
</dbReference>
<dbReference type="NCBIfam" id="TIGR00135">
    <property type="entry name" value="gatC"/>
    <property type="match status" value="1"/>
</dbReference>
<dbReference type="PANTHER" id="PTHR15004">
    <property type="entry name" value="GLUTAMYL-TRNA(GLN) AMIDOTRANSFERASE SUBUNIT C, MITOCHONDRIAL"/>
    <property type="match status" value="1"/>
</dbReference>
<dbReference type="PANTHER" id="PTHR15004:SF0">
    <property type="entry name" value="GLUTAMYL-TRNA(GLN) AMIDOTRANSFERASE SUBUNIT C, MITOCHONDRIAL"/>
    <property type="match status" value="1"/>
</dbReference>
<dbReference type="Pfam" id="PF02686">
    <property type="entry name" value="GatC"/>
    <property type="match status" value="1"/>
</dbReference>
<dbReference type="SUPFAM" id="SSF141000">
    <property type="entry name" value="Glu-tRNAGln amidotransferase C subunit"/>
    <property type="match status" value="1"/>
</dbReference>
<accession>Q92AQ2</accession>
<feature type="chain" id="PRO_0000105307" description="Aspartyl/glutamyl-tRNA(Asn/Gln) amidotransferase subunit C">
    <location>
        <begin position="1"/>
        <end position="97"/>
    </location>
</feature>
<comment type="function">
    <text evidence="1">Allows the formation of correctly charged Asn-tRNA(Asn) or Gln-tRNA(Gln) through the transamidation of misacylated Asp-tRNA(Asn) or Glu-tRNA(Gln) in organisms which lack either or both of asparaginyl-tRNA or glutaminyl-tRNA synthetases. The reaction takes place in the presence of glutamine and ATP through an activated phospho-Asp-tRNA(Asn) or phospho-Glu-tRNA(Gln).</text>
</comment>
<comment type="catalytic activity">
    <reaction evidence="1">
        <text>L-glutamyl-tRNA(Gln) + L-glutamine + ATP + H2O = L-glutaminyl-tRNA(Gln) + L-glutamate + ADP + phosphate + H(+)</text>
        <dbReference type="Rhea" id="RHEA:17521"/>
        <dbReference type="Rhea" id="RHEA-COMP:9681"/>
        <dbReference type="Rhea" id="RHEA-COMP:9684"/>
        <dbReference type="ChEBI" id="CHEBI:15377"/>
        <dbReference type="ChEBI" id="CHEBI:15378"/>
        <dbReference type="ChEBI" id="CHEBI:29985"/>
        <dbReference type="ChEBI" id="CHEBI:30616"/>
        <dbReference type="ChEBI" id="CHEBI:43474"/>
        <dbReference type="ChEBI" id="CHEBI:58359"/>
        <dbReference type="ChEBI" id="CHEBI:78520"/>
        <dbReference type="ChEBI" id="CHEBI:78521"/>
        <dbReference type="ChEBI" id="CHEBI:456216"/>
    </reaction>
</comment>
<comment type="catalytic activity">
    <reaction evidence="1">
        <text>L-aspartyl-tRNA(Asn) + L-glutamine + ATP + H2O = L-asparaginyl-tRNA(Asn) + L-glutamate + ADP + phosphate + 2 H(+)</text>
        <dbReference type="Rhea" id="RHEA:14513"/>
        <dbReference type="Rhea" id="RHEA-COMP:9674"/>
        <dbReference type="Rhea" id="RHEA-COMP:9677"/>
        <dbReference type="ChEBI" id="CHEBI:15377"/>
        <dbReference type="ChEBI" id="CHEBI:15378"/>
        <dbReference type="ChEBI" id="CHEBI:29985"/>
        <dbReference type="ChEBI" id="CHEBI:30616"/>
        <dbReference type="ChEBI" id="CHEBI:43474"/>
        <dbReference type="ChEBI" id="CHEBI:58359"/>
        <dbReference type="ChEBI" id="CHEBI:78515"/>
        <dbReference type="ChEBI" id="CHEBI:78516"/>
        <dbReference type="ChEBI" id="CHEBI:456216"/>
    </reaction>
</comment>
<comment type="subunit">
    <text evidence="1">Heterotrimer of A, B and C subunits.</text>
</comment>
<comment type="similarity">
    <text evidence="1">Belongs to the GatC family.</text>
</comment>
<reference key="1">
    <citation type="journal article" date="2001" name="Science">
        <title>Comparative genomics of Listeria species.</title>
        <authorList>
            <person name="Glaser P."/>
            <person name="Frangeul L."/>
            <person name="Buchrieser C."/>
            <person name="Rusniok C."/>
            <person name="Amend A."/>
            <person name="Baquero F."/>
            <person name="Berche P."/>
            <person name="Bloecker H."/>
            <person name="Brandt P."/>
            <person name="Chakraborty T."/>
            <person name="Charbit A."/>
            <person name="Chetouani F."/>
            <person name="Couve E."/>
            <person name="de Daruvar A."/>
            <person name="Dehoux P."/>
            <person name="Domann E."/>
            <person name="Dominguez-Bernal G."/>
            <person name="Duchaud E."/>
            <person name="Durant L."/>
            <person name="Dussurget O."/>
            <person name="Entian K.-D."/>
            <person name="Fsihi H."/>
            <person name="Garcia-del Portillo F."/>
            <person name="Garrido P."/>
            <person name="Gautier L."/>
            <person name="Goebel W."/>
            <person name="Gomez-Lopez N."/>
            <person name="Hain T."/>
            <person name="Hauf J."/>
            <person name="Jackson D."/>
            <person name="Jones L.-M."/>
            <person name="Kaerst U."/>
            <person name="Kreft J."/>
            <person name="Kuhn M."/>
            <person name="Kunst F."/>
            <person name="Kurapkat G."/>
            <person name="Madueno E."/>
            <person name="Maitournam A."/>
            <person name="Mata Vicente J."/>
            <person name="Ng E."/>
            <person name="Nedjari H."/>
            <person name="Nordsiek G."/>
            <person name="Novella S."/>
            <person name="de Pablos B."/>
            <person name="Perez-Diaz J.-C."/>
            <person name="Purcell R."/>
            <person name="Remmel B."/>
            <person name="Rose M."/>
            <person name="Schlueter T."/>
            <person name="Simoes N."/>
            <person name="Tierrez A."/>
            <person name="Vazquez-Boland J.-A."/>
            <person name="Voss H."/>
            <person name="Wehland J."/>
            <person name="Cossart P."/>
        </authorList>
    </citation>
    <scope>NUCLEOTIDE SEQUENCE [LARGE SCALE GENOMIC DNA]</scope>
    <source>
        <strain>ATCC BAA-680 / CLIP 11262</strain>
    </source>
</reference>
<keyword id="KW-0067">ATP-binding</keyword>
<keyword id="KW-0436">Ligase</keyword>
<keyword id="KW-0547">Nucleotide-binding</keyword>
<keyword id="KW-0648">Protein biosynthesis</keyword>
<protein>
    <recommendedName>
        <fullName evidence="1">Aspartyl/glutamyl-tRNA(Asn/Gln) amidotransferase subunit C</fullName>
        <shortName evidence="1">Asp/Glu-ADT subunit C</shortName>
        <ecNumber evidence="1">6.3.5.-</ecNumber>
    </recommendedName>
</protein>